<dbReference type="EC" id="3.4.24.-" evidence="1"/>
<dbReference type="EMBL" id="CP000266">
    <property type="protein sequence ID" value="ABF04508.1"/>
    <property type="molecule type" value="Genomic_DNA"/>
</dbReference>
<dbReference type="RefSeq" id="WP_001043825.1">
    <property type="nucleotide sequence ID" value="NC_008258.1"/>
</dbReference>
<dbReference type="SMR" id="Q0T2F7"/>
<dbReference type="MEROPS" id="M74.001"/>
<dbReference type="KEGG" id="sfv:SFV_2397"/>
<dbReference type="HOGENOM" id="CLU_052496_0_0_6"/>
<dbReference type="Proteomes" id="UP000000659">
    <property type="component" value="Chromosome"/>
</dbReference>
<dbReference type="GO" id="GO:0030288">
    <property type="term" value="C:outer membrane-bounded periplasmic space"/>
    <property type="evidence" value="ECO:0007669"/>
    <property type="project" value="InterPro"/>
</dbReference>
<dbReference type="GO" id="GO:0046872">
    <property type="term" value="F:metal ion binding"/>
    <property type="evidence" value="ECO:0007669"/>
    <property type="project" value="UniProtKB-KW"/>
</dbReference>
<dbReference type="GO" id="GO:0004222">
    <property type="term" value="F:metalloendopeptidase activity"/>
    <property type="evidence" value="ECO:0007669"/>
    <property type="project" value="UniProtKB-UniRule"/>
</dbReference>
<dbReference type="GO" id="GO:0004252">
    <property type="term" value="F:serine-type endopeptidase activity"/>
    <property type="evidence" value="ECO:0007669"/>
    <property type="project" value="InterPro"/>
</dbReference>
<dbReference type="GO" id="GO:0000270">
    <property type="term" value="P:peptidoglycan metabolic process"/>
    <property type="evidence" value="ECO:0007669"/>
    <property type="project" value="UniProtKB-UniRule"/>
</dbReference>
<dbReference type="GO" id="GO:0006508">
    <property type="term" value="P:proteolysis"/>
    <property type="evidence" value="ECO:0007669"/>
    <property type="project" value="UniProtKB-KW"/>
</dbReference>
<dbReference type="FunFam" id="3.30.1380.10:FF:000002">
    <property type="entry name" value="Penicillin-insensitive murein endopeptidase"/>
    <property type="match status" value="1"/>
</dbReference>
<dbReference type="Gene3D" id="3.30.1380.10">
    <property type="match status" value="1"/>
</dbReference>
<dbReference type="HAMAP" id="MF_01623">
    <property type="entry name" value="MepA"/>
    <property type="match status" value="1"/>
</dbReference>
<dbReference type="InterPro" id="IPR009045">
    <property type="entry name" value="Hedgehog_sig/DD-Pept_Zn-bd_sf"/>
</dbReference>
<dbReference type="InterPro" id="IPR005073">
    <property type="entry name" value="Peptidase_M74"/>
</dbReference>
<dbReference type="NCBIfam" id="NF006947">
    <property type="entry name" value="PRK09429.1"/>
    <property type="match status" value="1"/>
</dbReference>
<dbReference type="Pfam" id="PF03411">
    <property type="entry name" value="Peptidase_M74"/>
    <property type="match status" value="1"/>
</dbReference>
<dbReference type="PIRSF" id="PIRSF018455">
    <property type="entry name" value="MepA"/>
    <property type="match status" value="1"/>
</dbReference>
<dbReference type="SUPFAM" id="SSF55166">
    <property type="entry name" value="Hedgehog/DD-peptidase"/>
    <property type="match status" value="1"/>
</dbReference>
<feature type="signal peptide" evidence="1">
    <location>
        <begin position="1"/>
        <end position="19"/>
    </location>
</feature>
<feature type="chain" id="PRO_0000292558" description="Penicillin-insensitive murein endopeptidase">
    <location>
        <begin position="20"/>
        <end position="274"/>
    </location>
</feature>
<feature type="region of interest" description="Disordered" evidence="2">
    <location>
        <begin position="228"/>
        <end position="274"/>
    </location>
</feature>
<feature type="binding site" evidence="1">
    <location>
        <position position="110"/>
    </location>
    <ligand>
        <name>Zn(2+)</name>
        <dbReference type="ChEBI" id="CHEBI:29105"/>
        <label>1</label>
    </ligand>
</feature>
<feature type="binding site" evidence="1">
    <location>
        <position position="113"/>
    </location>
    <ligand>
        <name>Zn(2+)</name>
        <dbReference type="ChEBI" id="CHEBI:29105"/>
        <label>1</label>
    </ligand>
</feature>
<feature type="binding site" evidence="1">
    <location>
        <position position="120"/>
    </location>
    <ligand>
        <name>Zn(2+)</name>
        <dbReference type="ChEBI" id="CHEBI:29105"/>
        <label>1</label>
    </ligand>
</feature>
<feature type="binding site" evidence="1">
    <location>
        <position position="147"/>
    </location>
    <ligand>
        <name>Zn(2+)</name>
        <dbReference type="ChEBI" id="CHEBI:29105"/>
        <label>2</label>
    </ligand>
</feature>
<feature type="binding site" evidence="1">
    <location>
        <position position="150"/>
    </location>
    <ligand>
        <name>Zn(2+)</name>
        <dbReference type="ChEBI" id="CHEBI:29105"/>
        <label>2</label>
    </ligand>
</feature>
<feature type="binding site" evidence="1">
    <location>
        <position position="211"/>
    </location>
    <ligand>
        <name>Zn(2+)</name>
        <dbReference type="ChEBI" id="CHEBI:29105"/>
        <label>1</label>
    </ligand>
</feature>
<feature type="disulfide bond" evidence="1">
    <location>
        <begin position="44"/>
        <end position="265"/>
    </location>
</feature>
<feature type="disulfide bond" evidence="1">
    <location>
        <begin position="187"/>
        <end position="235"/>
    </location>
</feature>
<feature type="disulfide bond" evidence="1">
    <location>
        <begin position="216"/>
        <end position="223"/>
    </location>
</feature>
<accession>Q0T2F7</accession>
<name>MEPA_SHIF8</name>
<protein>
    <recommendedName>
        <fullName evidence="1">Penicillin-insensitive murein endopeptidase</fullName>
        <ecNumber evidence="1">3.4.24.-</ecNumber>
    </recommendedName>
    <alternativeName>
        <fullName evidence="1">D-alanyl-D-alanine-endopeptidase</fullName>
        <shortName evidence="1">DD-endopeptidase</shortName>
    </alternativeName>
</protein>
<reference key="1">
    <citation type="journal article" date="2006" name="BMC Genomics">
        <title>Complete genome sequence of Shigella flexneri 5b and comparison with Shigella flexneri 2a.</title>
        <authorList>
            <person name="Nie H."/>
            <person name="Yang F."/>
            <person name="Zhang X."/>
            <person name="Yang J."/>
            <person name="Chen L."/>
            <person name="Wang J."/>
            <person name="Xiong Z."/>
            <person name="Peng J."/>
            <person name="Sun L."/>
            <person name="Dong J."/>
            <person name="Xue Y."/>
            <person name="Xu X."/>
            <person name="Chen S."/>
            <person name="Yao Z."/>
            <person name="Shen Y."/>
            <person name="Jin Q."/>
        </authorList>
    </citation>
    <scope>NUCLEOTIDE SEQUENCE [LARGE SCALE GENOMIC DNA]</scope>
    <source>
        <strain>8401</strain>
    </source>
</reference>
<proteinExistence type="inferred from homology"/>
<organism>
    <name type="scientific">Shigella flexneri serotype 5b (strain 8401)</name>
    <dbReference type="NCBI Taxonomy" id="373384"/>
    <lineage>
        <taxon>Bacteria</taxon>
        <taxon>Pseudomonadati</taxon>
        <taxon>Pseudomonadota</taxon>
        <taxon>Gammaproteobacteria</taxon>
        <taxon>Enterobacterales</taxon>
        <taxon>Enterobacteriaceae</taxon>
        <taxon>Shigella</taxon>
    </lineage>
</organism>
<comment type="function">
    <text evidence="1">Murein endopeptidase that cleaves the D-alanyl-meso-2,6-diamino-pimelyl amide bond that connects peptidoglycan strands. Likely plays a role in the removal of murein from the sacculus.</text>
</comment>
<comment type="cofactor">
    <cofactor evidence="1">
        <name>Zn(2+)</name>
        <dbReference type="ChEBI" id="CHEBI:29105"/>
    </cofactor>
    <text evidence="1">Binds 2 Zn(2+) ions per subunit. Zn(2+) ion 1 is bound in the active site. Zn(2+) ion 2 is bound at the dimer interface by residues from both subunits.</text>
</comment>
<comment type="subunit">
    <text evidence="1">Dimer.</text>
</comment>
<comment type="subcellular location">
    <subcellularLocation>
        <location evidence="1">Periplasm</location>
    </subcellularLocation>
</comment>
<comment type="similarity">
    <text evidence="1">Belongs to the peptidase M74 family.</text>
</comment>
<evidence type="ECO:0000255" key="1">
    <source>
        <dbReference type="HAMAP-Rule" id="MF_01623"/>
    </source>
</evidence>
<evidence type="ECO:0000256" key="2">
    <source>
        <dbReference type="SAM" id="MobiDB-lite"/>
    </source>
</evidence>
<gene>
    <name evidence="1" type="primary">mepA</name>
    <name type="ordered locus">SFV_2397</name>
</gene>
<sequence>MNKTAIALLALLASSASLAATPWQKITQPVPGSAQSIGSFSNGCIVGADTLPIQSEHYQVMRTDQRRYFGHPDLVMFIQRLSSQVSNLGMGTVLIGDMGMPAGGRFNGGHASHQTGLDVDIFLQLPKTRWTSAQLLRPQALDLVSRDGKHVVSTLWKPEIFSLIKLAAQDKDVTRIFVNPAIKQQLCLDAGTDRDWLRKVRPWFQHRAHMHVRLRCPADSLECEDQPLPPSGDGCGAELQSWFEPPKPGTTKPEKKTPPPLPPSCQALLDEHVI</sequence>
<keyword id="KW-1015">Disulfide bond</keyword>
<keyword id="KW-0378">Hydrolase</keyword>
<keyword id="KW-0479">Metal-binding</keyword>
<keyword id="KW-0482">Metalloprotease</keyword>
<keyword id="KW-0574">Periplasm</keyword>
<keyword id="KW-0645">Protease</keyword>
<keyword id="KW-0732">Signal</keyword>
<keyword id="KW-0862">Zinc</keyword>